<keyword id="KW-1003">Cell membrane</keyword>
<keyword id="KW-0472">Membrane</keyword>
<keyword id="KW-0552">Olfaction</keyword>
<keyword id="KW-0675">Receptor</keyword>
<keyword id="KW-1185">Reference proteome</keyword>
<keyword id="KW-0716">Sensory transduction</keyword>
<keyword id="KW-0807">Transducer</keyword>
<keyword id="KW-0812">Transmembrane</keyword>
<keyword id="KW-1133">Transmembrane helix</keyword>
<organism>
    <name type="scientific">Drosophila melanogaster</name>
    <name type="common">Fruit fly</name>
    <dbReference type="NCBI Taxonomy" id="7227"/>
    <lineage>
        <taxon>Eukaryota</taxon>
        <taxon>Metazoa</taxon>
        <taxon>Ecdysozoa</taxon>
        <taxon>Arthropoda</taxon>
        <taxon>Hexapoda</taxon>
        <taxon>Insecta</taxon>
        <taxon>Pterygota</taxon>
        <taxon>Neoptera</taxon>
        <taxon>Endopterygota</taxon>
        <taxon>Diptera</taxon>
        <taxon>Brachycera</taxon>
        <taxon>Muscomorpha</taxon>
        <taxon>Ephydroidea</taxon>
        <taxon>Drosophilidae</taxon>
        <taxon>Drosophila</taxon>
        <taxon>Sophophora</taxon>
    </lineage>
</organism>
<feature type="chain" id="PRO_0000174264" description="Odorant receptor 67c">
    <location>
        <begin position="1"/>
        <end position="404"/>
    </location>
</feature>
<feature type="topological domain" description="Cytoplasmic" evidence="2">
    <location>
        <begin position="1"/>
        <end position="45"/>
    </location>
</feature>
<feature type="transmembrane region" description="Helical; Name=1" evidence="2">
    <location>
        <begin position="46"/>
        <end position="66"/>
    </location>
</feature>
<feature type="topological domain" description="Extracellular" evidence="2">
    <location>
        <begin position="67"/>
        <end position="79"/>
    </location>
</feature>
<feature type="transmembrane region" description="Helical; Name=2" evidence="2">
    <location>
        <begin position="80"/>
        <end position="100"/>
    </location>
</feature>
<feature type="topological domain" description="Cytoplasmic" evidence="2">
    <location>
        <begin position="101"/>
        <end position="139"/>
    </location>
</feature>
<feature type="transmembrane region" description="Helical; Name=3" evidence="2">
    <location>
        <begin position="140"/>
        <end position="160"/>
    </location>
</feature>
<feature type="topological domain" description="Extracellular" evidence="2">
    <location>
        <begin position="161"/>
        <end position="204"/>
    </location>
</feature>
<feature type="transmembrane region" description="Helical; Name=4" evidence="2">
    <location>
        <begin position="205"/>
        <end position="225"/>
    </location>
</feature>
<feature type="topological domain" description="Cytoplasmic" evidence="2">
    <location>
        <begin position="226"/>
        <end position="277"/>
    </location>
</feature>
<feature type="transmembrane region" description="Helical; Name=5" evidence="2">
    <location>
        <begin position="278"/>
        <end position="298"/>
    </location>
</feature>
<feature type="topological domain" description="Extracellular" evidence="2">
    <location>
        <begin position="299"/>
        <end position="304"/>
    </location>
</feature>
<feature type="transmembrane region" description="Helical; Name=6" evidence="2">
    <location>
        <begin position="305"/>
        <end position="326"/>
    </location>
</feature>
<feature type="topological domain" description="Cytoplasmic" evidence="2">
    <location>
        <begin position="327"/>
        <end position="373"/>
    </location>
</feature>
<feature type="transmembrane region" description="Helical; Name=7" evidence="2">
    <location>
        <begin position="374"/>
        <end position="394"/>
    </location>
</feature>
<feature type="topological domain" description="Extracellular" evidence="2">
    <location>
        <begin position="395"/>
        <end position="404"/>
    </location>
</feature>
<comment type="function">
    <text evidence="4">Odorant receptor which mediates acceptance or avoidance behavior, depending on its substrates. The odorant receptor repertoire encodes a large collection of odor stimuli that vary widely in identity, intensity, and duration. May form a complex with Orco to form odorant-sensing units, providing sensitive and prolonged odorant signaling and calcium permeability.</text>
</comment>
<comment type="subunit">
    <text evidence="1">Interacts with Orco. Complexes exist early in the endomembrane system in olfactory sensory neurons (OSNs), coupling these complexes to the conserved ciliary trafficking pathway (By similarity).</text>
</comment>
<comment type="subcellular location">
    <subcellularLocation>
        <location evidence="1">Cell membrane</location>
        <topology evidence="1">Multi-pass membrane protein</topology>
    </subcellularLocation>
</comment>
<comment type="tissue specificity">
    <text evidence="3">Expressed in olfactory sensory neurons in the antenna.</text>
</comment>
<comment type="miscellaneous">
    <text>The atypical heteromeric and topological design of the odorant receptors appears to be an insect-specific solution for odor recognition, making the OR/Orco complex an attractive target for the development of highly selective insect repellents to disrupt olfactory-mediated host-seeking behaviors of insect disease vectors. Odor-evoked OR currents are independent of known G-protein-coupled second messenger pathways.</text>
</comment>
<comment type="similarity">
    <text evidence="5">Belongs to the insect chemoreceptor superfamily. Heteromeric odorant receptor channel (TC 1.A.69) family. Or49a subfamily.</text>
</comment>
<reference key="1">
    <citation type="journal article" date="2000" name="Science">
        <title>The genome sequence of Drosophila melanogaster.</title>
        <authorList>
            <person name="Adams M.D."/>
            <person name="Celniker S.E."/>
            <person name="Holt R.A."/>
            <person name="Evans C.A."/>
            <person name="Gocayne J.D."/>
            <person name="Amanatides P.G."/>
            <person name="Scherer S.E."/>
            <person name="Li P.W."/>
            <person name="Hoskins R.A."/>
            <person name="Galle R.F."/>
            <person name="George R.A."/>
            <person name="Lewis S.E."/>
            <person name="Richards S."/>
            <person name="Ashburner M."/>
            <person name="Henderson S.N."/>
            <person name="Sutton G.G."/>
            <person name="Wortman J.R."/>
            <person name="Yandell M.D."/>
            <person name="Zhang Q."/>
            <person name="Chen L.X."/>
            <person name="Brandon R.C."/>
            <person name="Rogers Y.-H.C."/>
            <person name="Blazej R.G."/>
            <person name="Champe M."/>
            <person name="Pfeiffer B.D."/>
            <person name="Wan K.H."/>
            <person name="Doyle C."/>
            <person name="Baxter E.G."/>
            <person name="Helt G."/>
            <person name="Nelson C.R."/>
            <person name="Miklos G.L.G."/>
            <person name="Abril J.F."/>
            <person name="Agbayani A."/>
            <person name="An H.-J."/>
            <person name="Andrews-Pfannkoch C."/>
            <person name="Baldwin D."/>
            <person name="Ballew R.M."/>
            <person name="Basu A."/>
            <person name="Baxendale J."/>
            <person name="Bayraktaroglu L."/>
            <person name="Beasley E.M."/>
            <person name="Beeson K.Y."/>
            <person name="Benos P.V."/>
            <person name="Berman B.P."/>
            <person name="Bhandari D."/>
            <person name="Bolshakov S."/>
            <person name="Borkova D."/>
            <person name="Botchan M.R."/>
            <person name="Bouck J."/>
            <person name="Brokstein P."/>
            <person name="Brottier P."/>
            <person name="Burtis K.C."/>
            <person name="Busam D.A."/>
            <person name="Butler H."/>
            <person name="Cadieu E."/>
            <person name="Center A."/>
            <person name="Chandra I."/>
            <person name="Cherry J.M."/>
            <person name="Cawley S."/>
            <person name="Dahlke C."/>
            <person name="Davenport L.B."/>
            <person name="Davies P."/>
            <person name="de Pablos B."/>
            <person name="Delcher A."/>
            <person name="Deng Z."/>
            <person name="Mays A.D."/>
            <person name="Dew I."/>
            <person name="Dietz S.M."/>
            <person name="Dodson K."/>
            <person name="Doup L.E."/>
            <person name="Downes M."/>
            <person name="Dugan-Rocha S."/>
            <person name="Dunkov B.C."/>
            <person name="Dunn P."/>
            <person name="Durbin K.J."/>
            <person name="Evangelista C.C."/>
            <person name="Ferraz C."/>
            <person name="Ferriera S."/>
            <person name="Fleischmann W."/>
            <person name="Fosler C."/>
            <person name="Gabrielian A.E."/>
            <person name="Garg N.S."/>
            <person name="Gelbart W.M."/>
            <person name="Glasser K."/>
            <person name="Glodek A."/>
            <person name="Gong F."/>
            <person name="Gorrell J.H."/>
            <person name="Gu Z."/>
            <person name="Guan P."/>
            <person name="Harris M."/>
            <person name="Harris N.L."/>
            <person name="Harvey D.A."/>
            <person name="Heiman T.J."/>
            <person name="Hernandez J.R."/>
            <person name="Houck J."/>
            <person name="Hostin D."/>
            <person name="Houston K.A."/>
            <person name="Howland T.J."/>
            <person name="Wei M.-H."/>
            <person name="Ibegwam C."/>
            <person name="Jalali M."/>
            <person name="Kalush F."/>
            <person name="Karpen G.H."/>
            <person name="Ke Z."/>
            <person name="Kennison J.A."/>
            <person name="Ketchum K.A."/>
            <person name="Kimmel B.E."/>
            <person name="Kodira C.D."/>
            <person name="Kraft C.L."/>
            <person name="Kravitz S."/>
            <person name="Kulp D."/>
            <person name="Lai Z."/>
            <person name="Lasko P."/>
            <person name="Lei Y."/>
            <person name="Levitsky A.A."/>
            <person name="Li J.H."/>
            <person name="Li Z."/>
            <person name="Liang Y."/>
            <person name="Lin X."/>
            <person name="Liu X."/>
            <person name="Mattei B."/>
            <person name="McIntosh T.C."/>
            <person name="McLeod M.P."/>
            <person name="McPherson D."/>
            <person name="Merkulov G."/>
            <person name="Milshina N.V."/>
            <person name="Mobarry C."/>
            <person name="Morris J."/>
            <person name="Moshrefi A."/>
            <person name="Mount S.M."/>
            <person name="Moy M."/>
            <person name="Murphy B."/>
            <person name="Murphy L."/>
            <person name="Muzny D.M."/>
            <person name="Nelson D.L."/>
            <person name="Nelson D.R."/>
            <person name="Nelson K.A."/>
            <person name="Nixon K."/>
            <person name="Nusskern D.R."/>
            <person name="Pacleb J.M."/>
            <person name="Palazzolo M."/>
            <person name="Pittman G.S."/>
            <person name="Pan S."/>
            <person name="Pollard J."/>
            <person name="Puri V."/>
            <person name="Reese M.G."/>
            <person name="Reinert K."/>
            <person name="Remington K."/>
            <person name="Saunders R.D.C."/>
            <person name="Scheeler F."/>
            <person name="Shen H."/>
            <person name="Shue B.C."/>
            <person name="Siden-Kiamos I."/>
            <person name="Simpson M."/>
            <person name="Skupski M.P."/>
            <person name="Smith T.J."/>
            <person name="Spier E."/>
            <person name="Spradling A.C."/>
            <person name="Stapleton M."/>
            <person name="Strong R."/>
            <person name="Sun E."/>
            <person name="Svirskas R."/>
            <person name="Tector C."/>
            <person name="Turner R."/>
            <person name="Venter E."/>
            <person name="Wang A.H."/>
            <person name="Wang X."/>
            <person name="Wang Z.-Y."/>
            <person name="Wassarman D.A."/>
            <person name="Weinstock G.M."/>
            <person name="Weissenbach J."/>
            <person name="Williams S.M."/>
            <person name="Woodage T."/>
            <person name="Worley K.C."/>
            <person name="Wu D."/>
            <person name="Yang S."/>
            <person name="Yao Q.A."/>
            <person name="Ye J."/>
            <person name="Yeh R.-F."/>
            <person name="Zaveri J.S."/>
            <person name="Zhan M."/>
            <person name="Zhang G."/>
            <person name="Zhao Q."/>
            <person name="Zheng L."/>
            <person name="Zheng X.H."/>
            <person name="Zhong F.N."/>
            <person name="Zhong W."/>
            <person name="Zhou X."/>
            <person name="Zhu S.C."/>
            <person name="Zhu X."/>
            <person name="Smith H.O."/>
            <person name="Gibbs R.A."/>
            <person name="Myers E.W."/>
            <person name="Rubin G.M."/>
            <person name="Venter J.C."/>
        </authorList>
    </citation>
    <scope>NUCLEOTIDE SEQUENCE [LARGE SCALE GENOMIC DNA]</scope>
    <source>
        <strain>Berkeley</strain>
    </source>
</reference>
<reference key="2">
    <citation type="journal article" date="2002" name="Genome Biol.">
        <title>Annotation of the Drosophila melanogaster euchromatic genome: a systematic review.</title>
        <authorList>
            <person name="Misra S."/>
            <person name="Crosby M.A."/>
            <person name="Mungall C.J."/>
            <person name="Matthews B.B."/>
            <person name="Campbell K.S."/>
            <person name="Hradecky P."/>
            <person name="Huang Y."/>
            <person name="Kaminker J.S."/>
            <person name="Millburn G.H."/>
            <person name="Prochnik S.E."/>
            <person name="Smith C.D."/>
            <person name="Tupy J.L."/>
            <person name="Whitfield E.J."/>
            <person name="Bayraktaroglu L."/>
            <person name="Berman B.P."/>
            <person name="Bettencourt B.R."/>
            <person name="Celniker S.E."/>
            <person name="de Grey A.D.N.J."/>
            <person name="Drysdale R.A."/>
            <person name="Harris N.L."/>
            <person name="Richter J."/>
            <person name="Russo S."/>
            <person name="Schroeder A.J."/>
            <person name="Shu S.Q."/>
            <person name="Stapleton M."/>
            <person name="Yamada C."/>
            <person name="Ashburner M."/>
            <person name="Gelbart W.M."/>
            <person name="Rubin G.M."/>
            <person name="Lewis S.E."/>
        </authorList>
    </citation>
    <scope>GENOME REANNOTATION</scope>
    <source>
        <strain>Berkeley</strain>
    </source>
</reference>
<reference key="3">
    <citation type="journal article" date="2000" name="Cell">
        <title>An olfactory sensory map in the fly brain.</title>
        <authorList>
            <person name="Vosshall L.B."/>
            <person name="Wong A.M."/>
            <person name="Axel R."/>
        </authorList>
    </citation>
    <scope>TISSUE SPECIFICITY</scope>
</reference>
<reference key="4">
    <citation type="journal article" date="2006" name="Cell">
        <title>Coding of odors by a receptor repertoire.</title>
        <authorList>
            <person name="Hallem E.A."/>
            <person name="Carlson J.R."/>
        </authorList>
    </citation>
    <scope>FUNCTION</scope>
</reference>
<proteinExistence type="evidence at transcript level"/>
<dbReference type="EMBL" id="AE014296">
    <property type="protein sequence ID" value="AAF50163.2"/>
    <property type="molecule type" value="Genomic_DNA"/>
</dbReference>
<dbReference type="RefSeq" id="NP_524018.2">
    <property type="nucleotide sequence ID" value="NM_079294.3"/>
</dbReference>
<dbReference type="SMR" id="Q9VT90"/>
<dbReference type="BioGRID" id="64571">
    <property type="interactions" value="1"/>
</dbReference>
<dbReference type="DIP" id="DIP-21646N"/>
<dbReference type="FunCoup" id="Q9VT90">
    <property type="interactions" value="38"/>
</dbReference>
<dbReference type="IntAct" id="Q9VT90">
    <property type="interactions" value="1"/>
</dbReference>
<dbReference type="STRING" id="7227.FBpp0076029"/>
<dbReference type="PaxDb" id="7227-FBpp0076029"/>
<dbReference type="EnsemblMetazoa" id="FBtr0076300">
    <property type="protein sequence ID" value="FBpp0076029"/>
    <property type="gene ID" value="FBgn0036078"/>
</dbReference>
<dbReference type="GeneID" id="39189"/>
<dbReference type="KEGG" id="dme:Dmel_CG14156"/>
<dbReference type="AGR" id="FB:FBgn0289868"/>
<dbReference type="CTD" id="39189"/>
<dbReference type="FlyBase" id="FBgn0289868">
    <property type="gene designation" value="Or67c"/>
</dbReference>
<dbReference type="VEuPathDB" id="VectorBase:FBgn0036078"/>
<dbReference type="eggNOG" id="ENOG502SR0T">
    <property type="taxonomic scope" value="Eukaryota"/>
</dbReference>
<dbReference type="GeneTree" id="ENSGT00560000077544"/>
<dbReference type="HOGENOM" id="CLU_033399_0_0_1"/>
<dbReference type="InParanoid" id="Q9VT90"/>
<dbReference type="OMA" id="MASMQIC"/>
<dbReference type="OrthoDB" id="8185860at2759"/>
<dbReference type="PhylomeDB" id="Q9VT90"/>
<dbReference type="SignaLink" id="Q9VT90"/>
<dbReference type="BioGRID-ORCS" id="39189">
    <property type="hits" value="0 hits in 1 CRISPR screen"/>
</dbReference>
<dbReference type="GenomeRNAi" id="39189"/>
<dbReference type="PRO" id="PR:Q9VT90"/>
<dbReference type="Proteomes" id="UP000000803">
    <property type="component" value="Chromosome 3L"/>
</dbReference>
<dbReference type="Bgee" id="FBgn0036078">
    <property type="expression patterns" value="Expressed in adult olfactory receptor neuron Or67c (Drosophila)"/>
</dbReference>
<dbReference type="ExpressionAtlas" id="Q9VT90">
    <property type="expression patterns" value="baseline and differential"/>
</dbReference>
<dbReference type="GO" id="GO:0032590">
    <property type="term" value="C:dendrite membrane"/>
    <property type="evidence" value="ECO:0000250"/>
    <property type="project" value="FlyBase"/>
</dbReference>
<dbReference type="GO" id="GO:0005886">
    <property type="term" value="C:plasma membrane"/>
    <property type="evidence" value="ECO:0007005"/>
    <property type="project" value="FlyBase"/>
</dbReference>
<dbReference type="GO" id="GO:0170020">
    <property type="term" value="F:ionotropic olfactory receptor activity"/>
    <property type="evidence" value="ECO:0007005"/>
    <property type="project" value="FlyBase"/>
</dbReference>
<dbReference type="GO" id="GO:0005549">
    <property type="term" value="F:odorant binding"/>
    <property type="evidence" value="ECO:0000250"/>
    <property type="project" value="FlyBase"/>
</dbReference>
<dbReference type="GO" id="GO:0050911">
    <property type="term" value="P:detection of chemical stimulus involved in sensory perception of smell"/>
    <property type="evidence" value="ECO:0007005"/>
    <property type="project" value="FlyBase"/>
</dbReference>
<dbReference type="GO" id="GO:0007165">
    <property type="term" value="P:signal transduction"/>
    <property type="evidence" value="ECO:0007669"/>
    <property type="project" value="UniProtKB-KW"/>
</dbReference>
<dbReference type="InterPro" id="IPR004117">
    <property type="entry name" value="7tm6_olfct_rcpt"/>
</dbReference>
<dbReference type="PANTHER" id="PTHR21137">
    <property type="entry name" value="ODORANT RECEPTOR"/>
    <property type="match status" value="1"/>
</dbReference>
<dbReference type="PANTHER" id="PTHR21137:SF44">
    <property type="entry name" value="ODORANT RECEPTOR 13A-RELATED"/>
    <property type="match status" value="1"/>
</dbReference>
<dbReference type="Pfam" id="PF02949">
    <property type="entry name" value="7tm_6"/>
    <property type="match status" value="1"/>
</dbReference>
<evidence type="ECO:0000250" key="1"/>
<evidence type="ECO:0000255" key="2"/>
<evidence type="ECO:0000269" key="3">
    <source>
    </source>
</evidence>
<evidence type="ECO:0000269" key="4">
    <source>
    </source>
</evidence>
<evidence type="ECO:0000305" key="5"/>
<name>OR67C_DROME</name>
<accession>Q9VT90</accession>
<sequence>METAKDNTARTFMELMRVPVQFYRTIGEDIYAHRSTNPLKSLLFKIYLYAGFINFNLLVIGELVFFYNSIQDFETIRLAIAVAPCIGFSLVADFKQAAMIRGKKTLIMLLDDLENMHPKTLAKQMEYKLPDFEKTMKRVINIFTFLCLAYTTTFSFYPAIKASVKFNFLGYDTFDRNFGFLIWFPFDATRNNLIYWIMYWDIAHGAYLAGIAFLCADLLLVVVITQICMHFNYISMRLEDHPCNSNEDKENIEFLIGIIRYHDKCLKLCEHVNDLYSFSLLLNFLMASMQICFIAFQVTESTVEVIIIYCIFLMTSMVQVFMVCYYGDTLIAASLKVGDAAYNQKWFQCSKSYCTMLKLLIMRSQKPASIRPPTFPPISLVTYMKVISMSYQFFALLRTTYSNN</sequence>
<protein>
    <recommendedName>
        <fullName>Odorant receptor 67c</fullName>
    </recommendedName>
</protein>
<gene>
    <name type="primary">Or67c</name>
    <name type="ORF">CG14156</name>
</gene>